<protein>
    <recommendedName>
        <fullName evidence="2">DnaA regulatory inactivator Hda</fullName>
    </recommendedName>
</protein>
<reference key="1">
    <citation type="journal article" date="2009" name="J. Bacteriol.">
        <title>Complete genome sequence and comparative genome analysis of enteropathogenic Escherichia coli O127:H6 strain E2348/69.</title>
        <authorList>
            <person name="Iguchi A."/>
            <person name="Thomson N.R."/>
            <person name="Ogura Y."/>
            <person name="Saunders D."/>
            <person name="Ooka T."/>
            <person name="Henderson I.R."/>
            <person name="Harris D."/>
            <person name="Asadulghani M."/>
            <person name="Kurokawa K."/>
            <person name="Dean P."/>
            <person name="Kenny B."/>
            <person name="Quail M.A."/>
            <person name="Thurston S."/>
            <person name="Dougan G."/>
            <person name="Hayashi T."/>
            <person name="Parkhill J."/>
            <person name="Frankel G."/>
        </authorList>
    </citation>
    <scope>NUCLEOTIDE SEQUENCE [LARGE SCALE GENOMIC DNA]</scope>
    <source>
        <strain>E2348/69 / EPEC</strain>
    </source>
</reference>
<comment type="function">
    <text evidence="1">Mediates the interaction of DNA replication initiator protein DnaA with DNA polymerase subunit beta sliding clamp (dnaN). Stimulates hydrolysis of ATP-DnaA to ADP-DnaA, rendering DnaA inactive for reinitiation, a process called regulatory inhibition of DnaA or RIDA (By similarity).</text>
</comment>
<comment type="subunit">
    <text evidence="2">The active form seems to be an ADP-bound monomer. Forms the RIDA complex (regulatory inactivation of DnaA) of ATP-DnaA, ADP-Hda and the DNA-loaded beta sliding clamp (dnaN).</text>
</comment>
<comment type="similarity">
    <text evidence="2">Belongs to the DnaA family. HdA subfamily.</text>
</comment>
<comment type="sequence caution" evidence="3">
    <conflict type="erroneous initiation">
        <sequence resource="EMBL-CDS" id="CAS10269"/>
    </conflict>
</comment>
<gene>
    <name evidence="2" type="primary">hda</name>
    <name type="ordered locus">E2348C_2721</name>
</gene>
<organism>
    <name type="scientific">Escherichia coli O127:H6 (strain E2348/69 / EPEC)</name>
    <dbReference type="NCBI Taxonomy" id="574521"/>
    <lineage>
        <taxon>Bacteria</taxon>
        <taxon>Pseudomonadati</taxon>
        <taxon>Pseudomonadota</taxon>
        <taxon>Gammaproteobacteria</taxon>
        <taxon>Enterobacterales</taxon>
        <taxon>Enterobacteriaceae</taxon>
        <taxon>Escherichia</taxon>
    </lineage>
</organism>
<dbReference type="EMBL" id="FM180568">
    <property type="protein sequence ID" value="CAS10269.1"/>
    <property type="status" value="ALT_INIT"/>
    <property type="molecule type" value="Genomic_DNA"/>
</dbReference>
<dbReference type="RefSeq" id="WP_001307333.1">
    <property type="nucleotide sequence ID" value="NC_011601.1"/>
</dbReference>
<dbReference type="SMR" id="B7UGN4"/>
<dbReference type="KEGG" id="ecg:E2348C_2721"/>
<dbReference type="HOGENOM" id="CLU_072265_1_1_6"/>
<dbReference type="Proteomes" id="UP000008205">
    <property type="component" value="Chromosome"/>
</dbReference>
<dbReference type="GO" id="GO:0006270">
    <property type="term" value="P:DNA replication initiation"/>
    <property type="evidence" value="ECO:0007669"/>
    <property type="project" value="TreeGrafter"/>
</dbReference>
<dbReference type="GO" id="GO:0032297">
    <property type="term" value="P:negative regulation of DNA-templated DNA replication initiation"/>
    <property type="evidence" value="ECO:0007669"/>
    <property type="project" value="InterPro"/>
</dbReference>
<dbReference type="FunFam" id="1.10.8.60:FF:000024">
    <property type="entry name" value="DnaA regulatory inactivator Hda"/>
    <property type="match status" value="1"/>
</dbReference>
<dbReference type="FunFam" id="3.40.50.300:FF:000452">
    <property type="entry name" value="DnaA regulatory inactivator Hda"/>
    <property type="match status" value="1"/>
</dbReference>
<dbReference type="Gene3D" id="1.10.8.60">
    <property type="match status" value="1"/>
</dbReference>
<dbReference type="Gene3D" id="3.40.50.300">
    <property type="entry name" value="P-loop containing nucleotide triphosphate hydrolases"/>
    <property type="match status" value="1"/>
</dbReference>
<dbReference type="HAMAP" id="MF_01158">
    <property type="entry name" value="Hda"/>
    <property type="match status" value="1"/>
</dbReference>
<dbReference type="InterPro" id="IPR020591">
    <property type="entry name" value="Chromosome_initiator_DnaA-like"/>
</dbReference>
<dbReference type="InterPro" id="IPR013317">
    <property type="entry name" value="DnaA_dom"/>
</dbReference>
<dbReference type="InterPro" id="IPR017788">
    <property type="entry name" value="Hda"/>
</dbReference>
<dbReference type="InterPro" id="IPR022864">
    <property type="entry name" value="Hda_Enterobact"/>
</dbReference>
<dbReference type="InterPro" id="IPR055199">
    <property type="entry name" value="Hda_lid"/>
</dbReference>
<dbReference type="InterPro" id="IPR027417">
    <property type="entry name" value="P-loop_NTPase"/>
</dbReference>
<dbReference type="NCBIfam" id="TIGR03420">
    <property type="entry name" value="DnaA_homol_Hda"/>
    <property type="match status" value="1"/>
</dbReference>
<dbReference type="NCBIfam" id="NF005982">
    <property type="entry name" value="PRK08084.1"/>
    <property type="match status" value="1"/>
</dbReference>
<dbReference type="PANTHER" id="PTHR30050">
    <property type="entry name" value="CHROMOSOMAL REPLICATION INITIATOR PROTEIN DNAA"/>
    <property type="match status" value="1"/>
</dbReference>
<dbReference type="PANTHER" id="PTHR30050:SF5">
    <property type="entry name" value="DNAA REGULATORY INACTIVATOR HDA"/>
    <property type="match status" value="1"/>
</dbReference>
<dbReference type="Pfam" id="PF00308">
    <property type="entry name" value="Bac_DnaA"/>
    <property type="match status" value="1"/>
</dbReference>
<dbReference type="Pfam" id="PF22688">
    <property type="entry name" value="Hda_lid"/>
    <property type="match status" value="1"/>
</dbReference>
<dbReference type="PRINTS" id="PR00051">
    <property type="entry name" value="DNAA"/>
</dbReference>
<dbReference type="SUPFAM" id="SSF52540">
    <property type="entry name" value="P-loop containing nucleoside triphosphate hydrolases"/>
    <property type="match status" value="1"/>
</dbReference>
<proteinExistence type="inferred from homology"/>
<evidence type="ECO:0000250" key="1"/>
<evidence type="ECO:0000255" key="2">
    <source>
        <dbReference type="HAMAP-Rule" id="MF_01158"/>
    </source>
</evidence>
<evidence type="ECO:0000305" key="3"/>
<sequence length="233" mass="26633">MNTPAQLSLPLYLPDDETFASFWPGDNSSLLAALQNVLRQEHSGYIYLWAREGAGRSHLLHAACAELSQRGDAVGYVPLDKRTWFVPEVLDGMEHLSLVCIDNIECIAGDELWEMAIFDLYNRILESGKTRLLITGDRPPRQLNLGLPDLASRLDWGQIYKLQPLSDEDKLQALQLRARLRGFELPEDVGRFLLKRLDREMRTLFMTLDQLDRASITAQRKLTIPFVKEILKL</sequence>
<name>HDA_ECO27</name>
<keyword id="KW-0235">DNA replication</keyword>
<keyword id="KW-0236">DNA replication inhibitor</keyword>
<keyword id="KW-1185">Reference proteome</keyword>
<accession>B7UGN4</accession>
<feature type="chain" id="PRO_1000164297" description="DnaA regulatory inactivator Hda">
    <location>
        <begin position="1"/>
        <end position="233"/>
    </location>
</feature>